<sequence length="472" mass="52756">MAGEDHPWHGSILYNLLMSAKQKHGSREEREVRLGAQCWGCACGTQPVLGGEGLPGGQALSLLYRCCFCGENHPRQGGILYSMLTNARQPSGATEAPRARFRTPCWGCACSNAKPLVGRXGLPAGQVPSLLYRCCFCGKKHPRQGSILYSLLTNAQQTHVSREVPEAHRGGEWWQLSYCTHNVGGPEGLQSTQAMAFLYRSYVCCEEQPQQSSVASDTPVRADQTPAAPQEQPRAPWWDTSSGVQRPIALKDPQVVCEAASAGLLKTLRFVKYLPCFQILPLDQQLVLVRSCWAPLLMLELAQDHLHFEMMEISEPNLMHEMLTTRRQETEGPEPADPQATEQPQTVSAEAGHVLSVAAVQAIKSFFFKCWSLNIDTKEYAYLKGTVLFNPDLPGLQCVKYIESLQWRTQQILTEHIRLMQREYQIRSAELNSALFLLRFINTDVVTELFFRPIIGAVSMDDMMLEMLCAKL</sequence>
<gene>
    <name type="primary">Nr0b1</name>
    <name type="synonym">Ahch</name>
    <name type="synonym">Dax1</name>
</gene>
<dbReference type="EMBL" id="X99470">
    <property type="protein sequence ID" value="CAA67832.1"/>
    <property type="molecule type" value="mRNA"/>
</dbReference>
<dbReference type="RefSeq" id="NP_445769.1">
    <property type="nucleotide sequence ID" value="NM_053317.1"/>
</dbReference>
<dbReference type="FunCoup" id="P70503">
    <property type="interactions" value="10"/>
</dbReference>
<dbReference type="STRING" id="10116.ENSRNOP00000005023"/>
<dbReference type="PhosphoSitePlus" id="P70503"/>
<dbReference type="PaxDb" id="10116-ENSRNOP00000005023"/>
<dbReference type="GeneID" id="58850"/>
<dbReference type="KEGG" id="rno:58850"/>
<dbReference type="AGR" id="RGD:62028"/>
<dbReference type="CTD" id="190"/>
<dbReference type="RGD" id="62028">
    <property type="gene designation" value="Nr0b1"/>
</dbReference>
<dbReference type="eggNOG" id="KOG3575">
    <property type="taxonomic scope" value="Eukaryota"/>
</dbReference>
<dbReference type="InParanoid" id="P70503"/>
<dbReference type="PhylomeDB" id="P70503"/>
<dbReference type="Reactome" id="R-RNO-383280">
    <property type="pathway name" value="Nuclear Receptor transcription pathway"/>
</dbReference>
<dbReference type="PRO" id="PR:P70503"/>
<dbReference type="Proteomes" id="UP000002494">
    <property type="component" value="Unplaced"/>
</dbReference>
<dbReference type="GO" id="GO:0005737">
    <property type="term" value="C:cytoplasm"/>
    <property type="evidence" value="ECO:0000266"/>
    <property type="project" value="RGD"/>
</dbReference>
<dbReference type="GO" id="GO:0016020">
    <property type="term" value="C:membrane"/>
    <property type="evidence" value="ECO:0000266"/>
    <property type="project" value="RGD"/>
</dbReference>
<dbReference type="GO" id="GO:0005634">
    <property type="term" value="C:nucleus"/>
    <property type="evidence" value="ECO:0000250"/>
    <property type="project" value="HGNC-UCL"/>
</dbReference>
<dbReference type="GO" id="GO:0005840">
    <property type="term" value="C:ribosome"/>
    <property type="evidence" value="ECO:0000250"/>
    <property type="project" value="HGNC-UCL"/>
</dbReference>
<dbReference type="GO" id="GO:0003677">
    <property type="term" value="F:DNA binding"/>
    <property type="evidence" value="ECO:0000304"/>
    <property type="project" value="RGD"/>
</dbReference>
<dbReference type="GO" id="GO:0032448">
    <property type="term" value="F:DNA hairpin binding"/>
    <property type="evidence" value="ECO:0000250"/>
    <property type="project" value="HGNC-UCL"/>
</dbReference>
<dbReference type="GO" id="GO:0003690">
    <property type="term" value="F:double-stranded DNA binding"/>
    <property type="evidence" value="ECO:0000315"/>
    <property type="project" value="RGD"/>
</dbReference>
<dbReference type="GO" id="GO:0016922">
    <property type="term" value="F:nuclear receptor binding"/>
    <property type="evidence" value="ECO:0000266"/>
    <property type="project" value="RGD"/>
</dbReference>
<dbReference type="GO" id="GO:0019904">
    <property type="term" value="F:protein domain specific binding"/>
    <property type="evidence" value="ECO:0000266"/>
    <property type="project" value="RGD"/>
</dbReference>
<dbReference type="GO" id="GO:0042803">
    <property type="term" value="F:protein homodimerization activity"/>
    <property type="evidence" value="ECO:0000266"/>
    <property type="project" value="RGD"/>
</dbReference>
<dbReference type="GO" id="GO:0003723">
    <property type="term" value="F:RNA binding"/>
    <property type="evidence" value="ECO:0000250"/>
    <property type="project" value="HGNC-UCL"/>
</dbReference>
<dbReference type="GO" id="GO:0061629">
    <property type="term" value="F:RNA polymerase II-specific DNA-binding transcription factor binding"/>
    <property type="evidence" value="ECO:0000266"/>
    <property type="project" value="RGD"/>
</dbReference>
<dbReference type="GO" id="GO:0043565">
    <property type="term" value="F:sequence-specific DNA binding"/>
    <property type="evidence" value="ECO:0000315"/>
    <property type="project" value="RGD"/>
</dbReference>
<dbReference type="GO" id="GO:0003714">
    <property type="term" value="F:transcription corepressor activity"/>
    <property type="evidence" value="ECO:0000266"/>
    <property type="project" value="RGD"/>
</dbReference>
<dbReference type="GO" id="GO:0030325">
    <property type="term" value="P:adrenal gland development"/>
    <property type="evidence" value="ECO:0000250"/>
    <property type="project" value="HGNC-UCL"/>
</dbReference>
<dbReference type="GO" id="GO:0035987">
    <property type="term" value="P:endodermal cell differentiation"/>
    <property type="evidence" value="ECO:0000266"/>
    <property type="project" value="RGD"/>
</dbReference>
<dbReference type="GO" id="GO:0008406">
    <property type="term" value="P:gonad development"/>
    <property type="evidence" value="ECO:0000250"/>
    <property type="project" value="HGNC-UCL"/>
</dbReference>
<dbReference type="GO" id="GO:0033327">
    <property type="term" value="P:Leydig cell differentiation"/>
    <property type="evidence" value="ECO:0000266"/>
    <property type="project" value="RGD"/>
</dbReference>
<dbReference type="GO" id="GO:0008584">
    <property type="term" value="P:male gonad development"/>
    <property type="evidence" value="ECO:0000266"/>
    <property type="project" value="RGD"/>
</dbReference>
<dbReference type="GO" id="GO:0030238">
    <property type="term" value="P:male sex determination"/>
    <property type="evidence" value="ECO:0000266"/>
    <property type="project" value="RGD"/>
</dbReference>
<dbReference type="GO" id="GO:0045892">
    <property type="term" value="P:negative regulation of DNA-templated transcription"/>
    <property type="evidence" value="ECO:0000250"/>
    <property type="project" value="HGNC-UCL"/>
</dbReference>
<dbReference type="GO" id="GO:0033144">
    <property type="term" value="P:negative regulation of intracellular steroid hormone receptor signaling pathway"/>
    <property type="evidence" value="ECO:0000266"/>
    <property type="project" value="RGD"/>
</dbReference>
<dbReference type="GO" id="GO:0010894">
    <property type="term" value="P:negative regulation of steroid biosynthetic process"/>
    <property type="evidence" value="ECO:0000250"/>
    <property type="project" value="HGNC-UCL"/>
</dbReference>
<dbReference type="GO" id="GO:0000122">
    <property type="term" value="P:negative regulation of transcription by RNA polymerase II"/>
    <property type="evidence" value="ECO:0000315"/>
    <property type="project" value="RGD"/>
</dbReference>
<dbReference type="GO" id="GO:0008104">
    <property type="term" value="P:protein localization"/>
    <property type="evidence" value="ECO:0000266"/>
    <property type="project" value="RGD"/>
</dbReference>
<dbReference type="GO" id="GO:0050810">
    <property type="term" value="P:regulation of steroid biosynthetic process"/>
    <property type="evidence" value="ECO:0000304"/>
    <property type="project" value="RGD"/>
</dbReference>
<dbReference type="GO" id="GO:0080021">
    <property type="term" value="P:response to benzoic acid"/>
    <property type="evidence" value="ECO:0000270"/>
    <property type="project" value="RGD"/>
</dbReference>
<dbReference type="GO" id="GO:0035902">
    <property type="term" value="P:response to immobilization stress"/>
    <property type="evidence" value="ECO:0000266"/>
    <property type="project" value="RGD"/>
</dbReference>
<dbReference type="GO" id="GO:0043434">
    <property type="term" value="P:response to peptide hormone"/>
    <property type="evidence" value="ECO:0000270"/>
    <property type="project" value="RGD"/>
</dbReference>
<dbReference type="GO" id="GO:0032526">
    <property type="term" value="P:response to retinoic acid"/>
    <property type="evidence" value="ECO:0000270"/>
    <property type="project" value="RGD"/>
</dbReference>
<dbReference type="GO" id="GO:0060008">
    <property type="term" value="P:Sertoli cell differentiation"/>
    <property type="evidence" value="ECO:0000266"/>
    <property type="project" value="RGD"/>
</dbReference>
<dbReference type="GO" id="GO:0007530">
    <property type="term" value="P:sex determination"/>
    <property type="evidence" value="ECO:0000266"/>
    <property type="project" value="RGD"/>
</dbReference>
<dbReference type="GO" id="GO:0007283">
    <property type="term" value="P:spermatogenesis"/>
    <property type="evidence" value="ECO:0000270"/>
    <property type="project" value="RGD"/>
</dbReference>
<dbReference type="CDD" id="cd07350">
    <property type="entry name" value="NR_LBD_Dax1"/>
    <property type="match status" value="1"/>
</dbReference>
<dbReference type="FunFam" id="1.10.565.10:FF:000027">
    <property type="entry name" value="nuclear receptor subfamily 0 group B member 1"/>
    <property type="match status" value="1"/>
</dbReference>
<dbReference type="Gene3D" id="1.10.565.10">
    <property type="entry name" value="Retinoid X Receptor"/>
    <property type="match status" value="1"/>
</dbReference>
<dbReference type="InterPro" id="IPR035500">
    <property type="entry name" value="NHR-like_dom_sf"/>
</dbReference>
<dbReference type="InterPro" id="IPR033544">
    <property type="entry name" value="NR0B1/2"/>
</dbReference>
<dbReference type="InterPro" id="IPR000536">
    <property type="entry name" value="Nucl_hrmn_rcpt_lig-bd"/>
</dbReference>
<dbReference type="InterPro" id="IPR001723">
    <property type="entry name" value="Nuclear_hrmn_rcpt"/>
</dbReference>
<dbReference type="InterPro" id="IPR025900">
    <property type="entry name" value="Nuclear_receptor_repeat"/>
</dbReference>
<dbReference type="PANTHER" id="PTHR24081">
    <property type="entry name" value="NUCLEAR RECEPTOR SUBFAMILY 0 GROUP B"/>
    <property type="match status" value="1"/>
</dbReference>
<dbReference type="PANTHER" id="PTHR24081:SF1">
    <property type="entry name" value="NUCLEAR RECEPTOR SUBFAMILY 0 GROUP B MEMBER 1"/>
    <property type="match status" value="1"/>
</dbReference>
<dbReference type="Pfam" id="PF00104">
    <property type="entry name" value="Hormone_recep"/>
    <property type="match status" value="1"/>
</dbReference>
<dbReference type="Pfam" id="PF14046">
    <property type="entry name" value="NR_Repeat"/>
    <property type="match status" value="4"/>
</dbReference>
<dbReference type="PRINTS" id="PR00398">
    <property type="entry name" value="STRDHORMONER"/>
</dbReference>
<dbReference type="SMART" id="SM00430">
    <property type="entry name" value="HOLI"/>
    <property type="match status" value="1"/>
</dbReference>
<dbReference type="SUPFAM" id="SSF48508">
    <property type="entry name" value="Nuclear receptor ligand-binding domain"/>
    <property type="match status" value="1"/>
</dbReference>
<dbReference type="PROSITE" id="PS51843">
    <property type="entry name" value="NR_LBD"/>
    <property type="match status" value="1"/>
</dbReference>
<accession>P70503</accession>
<accession>Q63152</accession>
<evidence type="ECO:0000250" key="1">
    <source>
        <dbReference type="UniProtKB" id="P51843"/>
    </source>
</evidence>
<evidence type="ECO:0000250" key="2">
    <source>
        <dbReference type="UniProtKB" id="Q61066"/>
    </source>
</evidence>
<evidence type="ECO:0000255" key="3">
    <source>
        <dbReference type="PROSITE-ProRule" id="PRU01189"/>
    </source>
</evidence>
<evidence type="ECO:0000256" key="4">
    <source>
        <dbReference type="SAM" id="MobiDB-lite"/>
    </source>
</evidence>
<evidence type="ECO:0000305" key="5"/>
<name>NR0B1_RAT</name>
<proteinExistence type="evidence at transcript level"/>
<comment type="function">
    <text evidence="1 2">Nuclear receptor that lacks a DNA-binding domain and acts as a corepressor that inhibits the transcriptional activity of other nuclear receptors through heterodimeric interactions. Component of a cascade required for the development of the hypothalamic-pituitary-adrenal-gonadal axis (By similarity). May also have a role in the development of the embryo and in the maintenance of embryonic stem cell pluripotency (By similarity).</text>
</comment>
<comment type="subunit">
    <text evidence="1 2">Homodimer. Interacts with NR5A1, NR5A2, NR0B2 and with COPS2 (By similarity). Interacts with ESRRB; represses ESRRB activity at the GATA6 promoter (By similarity).</text>
</comment>
<comment type="subcellular location">
    <subcellularLocation>
        <location evidence="1">Nucleus</location>
    </subcellularLocation>
    <subcellularLocation>
        <location evidence="1">Cytoplasm</location>
    </subcellularLocation>
    <text evidence="1">Shuttles between the cytoplasm and nucleus. Homodimers exits in the cytoplasm and in the nucleus.</text>
</comment>
<comment type="domain">
    <text evidence="1">Homodimerization involved an interaction between amino and carboxy termini involving LXXLL motifs and steroid binding domain (AF-2 motif). Heterodimerizes with NR5A1 and NROB2 through its N-terminal LXXLL motifs.</text>
</comment>
<comment type="similarity">
    <text evidence="5">Belongs to the nuclear hormone receptor family. NR0 subfamily.</text>
</comment>
<protein>
    <recommendedName>
        <fullName>Nuclear receptor subfamily 0 group B member 1</fullName>
    </recommendedName>
    <alternativeName>
        <fullName>Nuclear receptor DAX-1</fullName>
    </alternativeName>
</protein>
<reference key="1">
    <citation type="journal article" date="1996" name="Endocrinology">
        <title>Differential patterns of expression of DAX-1 and steroidogenic factor-1 (SF-1) in the fetal rat testis.</title>
        <authorList>
            <person name="Majdic G."/>
            <person name="Saunders P.T.K."/>
        </authorList>
    </citation>
    <scope>NUCLEOTIDE SEQUENCE [MRNA]</scope>
    <source>
        <tissue>Testis</tissue>
    </source>
</reference>
<keyword id="KW-0963">Cytoplasm</keyword>
<keyword id="KW-0539">Nucleus</keyword>
<keyword id="KW-0675">Receptor</keyword>
<keyword id="KW-1185">Reference proteome</keyword>
<keyword id="KW-0677">Repeat</keyword>
<keyword id="KW-0678">Repressor</keyword>
<keyword id="KW-0804">Transcription</keyword>
<keyword id="KW-0805">Transcription regulation</keyword>
<organism>
    <name type="scientific">Rattus norvegicus</name>
    <name type="common">Rat</name>
    <dbReference type="NCBI Taxonomy" id="10116"/>
    <lineage>
        <taxon>Eukaryota</taxon>
        <taxon>Metazoa</taxon>
        <taxon>Chordata</taxon>
        <taxon>Craniata</taxon>
        <taxon>Vertebrata</taxon>
        <taxon>Euteleostomi</taxon>
        <taxon>Mammalia</taxon>
        <taxon>Eutheria</taxon>
        <taxon>Euarchontoglires</taxon>
        <taxon>Glires</taxon>
        <taxon>Rodentia</taxon>
        <taxon>Myomorpha</taxon>
        <taxon>Muroidea</taxon>
        <taxon>Muridae</taxon>
        <taxon>Murinae</taxon>
        <taxon>Rattus</taxon>
    </lineage>
</organism>
<feature type="chain" id="PRO_0000053751" description="Nuclear receptor subfamily 0 group B member 1">
    <location>
        <begin position="1"/>
        <end position="472"/>
    </location>
</feature>
<feature type="repeat" description="1">
    <location>
        <begin position="1"/>
        <end position="67"/>
    </location>
</feature>
<feature type="repeat" description="2">
    <location>
        <begin position="68"/>
        <end position="135"/>
    </location>
</feature>
<feature type="repeat" description="3">
    <location>
        <begin position="136"/>
        <end position="202"/>
    </location>
</feature>
<feature type="domain" description="NR LBD" evidence="3">
    <location>
        <begin position="190"/>
        <end position="471"/>
    </location>
</feature>
<feature type="repeat" description="4; truncated">
    <location>
        <begin position="203"/>
        <end position="255"/>
    </location>
</feature>
<feature type="region of interest" description="4 X 67 AA tandem repeats">
    <location>
        <begin position="1"/>
        <end position="255"/>
    </location>
</feature>
<feature type="region of interest" description="Disordered" evidence="4">
    <location>
        <begin position="214"/>
        <end position="237"/>
    </location>
</feature>
<feature type="region of interest" description="Disordered" evidence="4">
    <location>
        <begin position="326"/>
        <end position="345"/>
    </location>
</feature>
<feature type="short sequence motif" description="LXXLL motif 1">
    <location>
        <begin position="13"/>
        <end position="17"/>
    </location>
</feature>
<feature type="short sequence motif" description="LXXLL motif 2">
    <location>
        <begin position="80"/>
        <end position="84"/>
    </location>
</feature>
<feature type="short sequence motif" description="LXXLL motif 3">
    <location>
        <begin position="148"/>
        <end position="152"/>
    </location>
</feature>
<feature type="short sequence motif" description="AF-2 motif">
    <location>
        <begin position="463"/>
        <end position="468"/>
    </location>
</feature>